<dbReference type="EMBL" id="CP000924">
    <property type="protein sequence ID" value="ABY94329.1"/>
    <property type="molecule type" value="Genomic_DNA"/>
</dbReference>
<dbReference type="SMR" id="B0K7T0"/>
<dbReference type="STRING" id="340099.Teth39_0666"/>
<dbReference type="KEGG" id="tpd:Teth39_0666"/>
<dbReference type="eggNOG" id="COG1660">
    <property type="taxonomic scope" value="Bacteria"/>
</dbReference>
<dbReference type="HOGENOM" id="CLU_059558_0_0_9"/>
<dbReference type="Proteomes" id="UP000002156">
    <property type="component" value="Chromosome"/>
</dbReference>
<dbReference type="GO" id="GO:0005524">
    <property type="term" value="F:ATP binding"/>
    <property type="evidence" value="ECO:0007669"/>
    <property type="project" value="UniProtKB-UniRule"/>
</dbReference>
<dbReference type="GO" id="GO:0005525">
    <property type="term" value="F:GTP binding"/>
    <property type="evidence" value="ECO:0007669"/>
    <property type="project" value="UniProtKB-UniRule"/>
</dbReference>
<dbReference type="Gene3D" id="3.40.50.300">
    <property type="entry name" value="P-loop containing nucleotide triphosphate hydrolases"/>
    <property type="match status" value="1"/>
</dbReference>
<dbReference type="HAMAP" id="MF_00636">
    <property type="entry name" value="RapZ_like"/>
    <property type="match status" value="1"/>
</dbReference>
<dbReference type="InterPro" id="IPR027417">
    <property type="entry name" value="P-loop_NTPase"/>
</dbReference>
<dbReference type="InterPro" id="IPR005337">
    <property type="entry name" value="RapZ-like"/>
</dbReference>
<dbReference type="InterPro" id="IPR053930">
    <property type="entry name" value="RapZ-like_N"/>
</dbReference>
<dbReference type="InterPro" id="IPR053931">
    <property type="entry name" value="RapZ_C"/>
</dbReference>
<dbReference type="NCBIfam" id="NF003828">
    <property type="entry name" value="PRK05416.1"/>
    <property type="match status" value="1"/>
</dbReference>
<dbReference type="PANTHER" id="PTHR30448">
    <property type="entry name" value="RNASE ADAPTER PROTEIN RAPZ"/>
    <property type="match status" value="1"/>
</dbReference>
<dbReference type="PANTHER" id="PTHR30448:SF0">
    <property type="entry name" value="RNASE ADAPTER PROTEIN RAPZ"/>
    <property type="match status" value="1"/>
</dbReference>
<dbReference type="Pfam" id="PF22740">
    <property type="entry name" value="PapZ_C"/>
    <property type="match status" value="1"/>
</dbReference>
<dbReference type="Pfam" id="PF03668">
    <property type="entry name" value="RapZ-like_N"/>
    <property type="match status" value="1"/>
</dbReference>
<dbReference type="PIRSF" id="PIRSF005052">
    <property type="entry name" value="P-loopkin"/>
    <property type="match status" value="1"/>
</dbReference>
<dbReference type="SUPFAM" id="SSF52540">
    <property type="entry name" value="P-loop containing nucleoside triphosphate hydrolases"/>
    <property type="match status" value="1"/>
</dbReference>
<name>Y666_THEP3</name>
<feature type="chain" id="PRO_1000130792" description="Nucleotide-binding protein Teth39_0666">
    <location>
        <begin position="1"/>
        <end position="284"/>
    </location>
</feature>
<feature type="binding site" evidence="1">
    <location>
        <begin position="8"/>
        <end position="15"/>
    </location>
    <ligand>
        <name>ATP</name>
        <dbReference type="ChEBI" id="CHEBI:30616"/>
    </ligand>
</feature>
<feature type="binding site" evidence="1">
    <location>
        <begin position="58"/>
        <end position="61"/>
    </location>
    <ligand>
        <name>GTP</name>
        <dbReference type="ChEBI" id="CHEBI:37565"/>
    </ligand>
</feature>
<comment type="function">
    <text evidence="1">Displays ATPase and GTPase activities.</text>
</comment>
<comment type="similarity">
    <text evidence="1">Belongs to the RapZ-like family.</text>
</comment>
<evidence type="ECO:0000255" key="1">
    <source>
        <dbReference type="HAMAP-Rule" id="MF_00636"/>
    </source>
</evidence>
<sequence length="284" mass="32719">MRFVIITGLSGAGKTQALKAMEDMGFFCIDNFPPALLPKLADLFYHSKNVDKVALGMDLRGGQFFEDIYSSLEFLKKNNYDYEIVFLEASDEVLIKRFKETRRKHPLSEEGRIVDGINEERKRLAEIRKIANSIIDTSNLTSSQLKEELSNIFLKGKKFKGIIIDIMSFGYKYGIPLDADLVFDVRFLPNPFYIEELRPLTGNDDKVKEYVMKWEEAKEFLKKLGDMIKFLIPYYIREGKSQLVIAIGCTGGKHRSVTIANALYEFLKKEDYSVILHHRDIGEE</sequence>
<protein>
    <recommendedName>
        <fullName evidence="1">Nucleotide-binding protein Teth39_0666</fullName>
    </recommendedName>
</protein>
<gene>
    <name type="ordered locus">Teth39_0666</name>
</gene>
<accession>B0K7T0</accession>
<organism>
    <name type="scientific">Thermoanaerobacter pseudethanolicus (strain ATCC 33223 / 39E)</name>
    <name type="common">Clostridium thermohydrosulfuricum</name>
    <dbReference type="NCBI Taxonomy" id="340099"/>
    <lineage>
        <taxon>Bacteria</taxon>
        <taxon>Bacillati</taxon>
        <taxon>Bacillota</taxon>
        <taxon>Clostridia</taxon>
        <taxon>Thermoanaerobacterales</taxon>
        <taxon>Thermoanaerobacteraceae</taxon>
        <taxon>Thermoanaerobacter</taxon>
    </lineage>
</organism>
<proteinExistence type="inferred from homology"/>
<keyword id="KW-0067">ATP-binding</keyword>
<keyword id="KW-0342">GTP-binding</keyword>
<keyword id="KW-0547">Nucleotide-binding</keyword>
<keyword id="KW-1185">Reference proteome</keyword>
<reference key="1">
    <citation type="submission" date="2008-01" db="EMBL/GenBank/DDBJ databases">
        <title>Complete sequence of Thermoanaerobacter pseudethanolicus 39E.</title>
        <authorList>
            <person name="Copeland A."/>
            <person name="Lucas S."/>
            <person name="Lapidus A."/>
            <person name="Barry K."/>
            <person name="Glavina del Rio T."/>
            <person name="Dalin E."/>
            <person name="Tice H."/>
            <person name="Pitluck S."/>
            <person name="Bruce D."/>
            <person name="Goodwin L."/>
            <person name="Saunders E."/>
            <person name="Brettin T."/>
            <person name="Detter J.C."/>
            <person name="Han C."/>
            <person name="Schmutz J."/>
            <person name="Larimer F."/>
            <person name="Land M."/>
            <person name="Hauser L."/>
            <person name="Kyrpides N."/>
            <person name="Lykidis A."/>
            <person name="Hemme C."/>
            <person name="Fields M.W."/>
            <person name="He Z."/>
            <person name="Zhou J."/>
            <person name="Richardson P."/>
        </authorList>
    </citation>
    <scope>NUCLEOTIDE SEQUENCE [LARGE SCALE GENOMIC DNA]</scope>
    <source>
        <strain>ATCC 33223 / DSM 2355 / 39E</strain>
    </source>
</reference>